<protein>
    <recommendedName>
        <fullName evidence="1">LexA repressor</fullName>
        <ecNumber evidence="1">3.4.21.88</ecNumber>
    </recommendedName>
</protein>
<name>LEXA_HAEIG</name>
<reference key="1">
    <citation type="journal article" date="2007" name="Genome Biol.">
        <title>Characterization and modeling of the Haemophilus influenzae core and supragenomes based on the complete genomic sequences of Rd and 12 clinical nontypeable strains.</title>
        <authorList>
            <person name="Hogg J.S."/>
            <person name="Hu F.Z."/>
            <person name="Janto B."/>
            <person name="Boissy R."/>
            <person name="Hayes J."/>
            <person name="Keefe R."/>
            <person name="Post J.C."/>
            <person name="Ehrlich G.D."/>
        </authorList>
    </citation>
    <scope>NUCLEOTIDE SEQUENCE [LARGE SCALE GENOMIC DNA]</scope>
    <source>
        <strain>PittGG</strain>
    </source>
</reference>
<feature type="chain" id="PRO_1000001290" description="LexA repressor">
    <location>
        <begin position="1"/>
        <end position="207"/>
    </location>
</feature>
<feature type="DNA-binding region" description="H-T-H motif" evidence="1">
    <location>
        <begin position="28"/>
        <end position="48"/>
    </location>
</feature>
<feature type="active site" description="For autocatalytic cleavage activity" evidence="1">
    <location>
        <position position="123"/>
    </location>
</feature>
<feature type="active site" description="For autocatalytic cleavage activity" evidence="1">
    <location>
        <position position="160"/>
    </location>
</feature>
<feature type="site" description="Cleavage; by autolysis" evidence="1">
    <location>
        <begin position="88"/>
        <end position="89"/>
    </location>
</feature>
<comment type="function">
    <text evidence="1">Represses a number of genes involved in the response to DNA damage (SOS response), including recA and lexA. In the presence of single-stranded DNA, RecA interacts with LexA causing an autocatalytic cleavage which disrupts the DNA-binding part of LexA, leading to derepression of the SOS regulon and eventually DNA repair.</text>
</comment>
<comment type="catalytic activity">
    <reaction evidence="1">
        <text>Hydrolysis of Ala-|-Gly bond in repressor LexA.</text>
        <dbReference type="EC" id="3.4.21.88"/>
    </reaction>
</comment>
<comment type="subunit">
    <text evidence="1">Homodimer.</text>
</comment>
<comment type="similarity">
    <text evidence="1">Belongs to the peptidase S24 family.</text>
</comment>
<gene>
    <name evidence="1" type="primary">lexA</name>
    <name type="ordered locus">CGSHiGG_07240</name>
</gene>
<keyword id="KW-0068">Autocatalytic cleavage</keyword>
<keyword id="KW-0227">DNA damage</keyword>
<keyword id="KW-0234">DNA repair</keyword>
<keyword id="KW-0235">DNA replication</keyword>
<keyword id="KW-0238">DNA-binding</keyword>
<keyword id="KW-0378">Hydrolase</keyword>
<keyword id="KW-0678">Repressor</keyword>
<keyword id="KW-0742">SOS response</keyword>
<keyword id="KW-0804">Transcription</keyword>
<keyword id="KW-0805">Transcription regulation</keyword>
<accession>A5UHQ3</accession>
<proteinExistence type="inferred from homology"/>
<sequence length="207" mass="23020">MRPLTARQQEVLDLLKRHLETTGMPPTRAEISRELGFKSANAAEEHLKALSRKGAIEIIPGASRGIRILDNSSNDEFDGLPLVGRVAAGEPILAEQHIEATYRVDADMFKPQADFLLKVYGLSMKNVGILDGDLLAVHSTKDVRNGQIVVARIEDEVTVKRLEKKGSIIYLHAENEEFDPIVVNLEEQKNFEIEGIAVGIIRNNAWM</sequence>
<dbReference type="EC" id="3.4.21.88" evidence="1"/>
<dbReference type="EMBL" id="CP000672">
    <property type="protein sequence ID" value="ABR00309.1"/>
    <property type="molecule type" value="Genomic_DNA"/>
</dbReference>
<dbReference type="SMR" id="A5UHQ3"/>
<dbReference type="MEROPS" id="S24.001"/>
<dbReference type="KEGG" id="hiq:CGSHiGG_07240"/>
<dbReference type="HOGENOM" id="CLU_066192_45_3_6"/>
<dbReference type="Proteomes" id="UP000001990">
    <property type="component" value="Chromosome"/>
</dbReference>
<dbReference type="GO" id="GO:0003677">
    <property type="term" value="F:DNA binding"/>
    <property type="evidence" value="ECO:0007669"/>
    <property type="project" value="UniProtKB-UniRule"/>
</dbReference>
<dbReference type="GO" id="GO:0004252">
    <property type="term" value="F:serine-type endopeptidase activity"/>
    <property type="evidence" value="ECO:0007669"/>
    <property type="project" value="UniProtKB-UniRule"/>
</dbReference>
<dbReference type="GO" id="GO:0006281">
    <property type="term" value="P:DNA repair"/>
    <property type="evidence" value="ECO:0007669"/>
    <property type="project" value="UniProtKB-UniRule"/>
</dbReference>
<dbReference type="GO" id="GO:0006260">
    <property type="term" value="P:DNA replication"/>
    <property type="evidence" value="ECO:0007669"/>
    <property type="project" value="UniProtKB-UniRule"/>
</dbReference>
<dbReference type="GO" id="GO:0045892">
    <property type="term" value="P:negative regulation of DNA-templated transcription"/>
    <property type="evidence" value="ECO:0007669"/>
    <property type="project" value="UniProtKB-UniRule"/>
</dbReference>
<dbReference type="GO" id="GO:0006508">
    <property type="term" value="P:proteolysis"/>
    <property type="evidence" value="ECO:0007669"/>
    <property type="project" value="InterPro"/>
</dbReference>
<dbReference type="GO" id="GO:0009432">
    <property type="term" value="P:SOS response"/>
    <property type="evidence" value="ECO:0007669"/>
    <property type="project" value="UniProtKB-UniRule"/>
</dbReference>
<dbReference type="CDD" id="cd06529">
    <property type="entry name" value="S24_LexA-like"/>
    <property type="match status" value="1"/>
</dbReference>
<dbReference type="FunFam" id="1.10.10.10:FF:000009">
    <property type="entry name" value="LexA repressor"/>
    <property type="match status" value="1"/>
</dbReference>
<dbReference type="FunFam" id="2.10.109.10:FF:000001">
    <property type="entry name" value="LexA repressor"/>
    <property type="match status" value="1"/>
</dbReference>
<dbReference type="Gene3D" id="2.10.109.10">
    <property type="entry name" value="Umud Fragment, subunit A"/>
    <property type="match status" value="1"/>
</dbReference>
<dbReference type="Gene3D" id="1.10.10.10">
    <property type="entry name" value="Winged helix-like DNA-binding domain superfamily/Winged helix DNA-binding domain"/>
    <property type="match status" value="1"/>
</dbReference>
<dbReference type="HAMAP" id="MF_00015">
    <property type="entry name" value="LexA"/>
    <property type="match status" value="1"/>
</dbReference>
<dbReference type="InterPro" id="IPR006200">
    <property type="entry name" value="LexA"/>
</dbReference>
<dbReference type="InterPro" id="IPR039418">
    <property type="entry name" value="LexA-like"/>
</dbReference>
<dbReference type="InterPro" id="IPR036286">
    <property type="entry name" value="LexA/Signal_pep-like_sf"/>
</dbReference>
<dbReference type="InterPro" id="IPR006199">
    <property type="entry name" value="LexA_DNA-bd_dom"/>
</dbReference>
<dbReference type="InterPro" id="IPR050077">
    <property type="entry name" value="LexA_repressor"/>
</dbReference>
<dbReference type="InterPro" id="IPR006197">
    <property type="entry name" value="Peptidase_S24_LexA"/>
</dbReference>
<dbReference type="InterPro" id="IPR015927">
    <property type="entry name" value="Peptidase_S24_S26A/B/C"/>
</dbReference>
<dbReference type="InterPro" id="IPR036388">
    <property type="entry name" value="WH-like_DNA-bd_sf"/>
</dbReference>
<dbReference type="InterPro" id="IPR036390">
    <property type="entry name" value="WH_DNA-bd_sf"/>
</dbReference>
<dbReference type="NCBIfam" id="TIGR00498">
    <property type="entry name" value="lexA"/>
    <property type="match status" value="1"/>
</dbReference>
<dbReference type="PANTHER" id="PTHR33516">
    <property type="entry name" value="LEXA REPRESSOR"/>
    <property type="match status" value="1"/>
</dbReference>
<dbReference type="PANTHER" id="PTHR33516:SF2">
    <property type="entry name" value="LEXA REPRESSOR-RELATED"/>
    <property type="match status" value="1"/>
</dbReference>
<dbReference type="Pfam" id="PF01726">
    <property type="entry name" value="LexA_DNA_bind"/>
    <property type="match status" value="1"/>
</dbReference>
<dbReference type="Pfam" id="PF00717">
    <property type="entry name" value="Peptidase_S24"/>
    <property type="match status" value="1"/>
</dbReference>
<dbReference type="PRINTS" id="PR00726">
    <property type="entry name" value="LEXASERPTASE"/>
</dbReference>
<dbReference type="SUPFAM" id="SSF51306">
    <property type="entry name" value="LexA/Signal peptidase"/>
    <property type="match status" value="1"/>
</dbReference>
<dbReference type="SUPFAM" id="SSF46785">
    <property type="entry name" value="Winged helix' DNA-binding domain"/>
    <property type="match status" value="1"/>
</dbReference>
<evidence type="ECO:0000255" key="1">
    <source>
        <dbReference type="HAMAP-Rule" id="MF_00015"/>
    </source>
</evidence>
<organism>
    <name type="scientific">Haemophilus influenzae (strain PittGG)</name>
    <dbReference type="NCBI Taxonomy" id="374931"/>
    <lineage>
        <taxon>Bacteria</taxon>
        <taxon>Pseudomonadati</taxon>
        <taxon>Pseudomonadota</taxon>
        <taxon>Gammaproteobacteria</taxon>
        <taxon>Pasteurellales</taxon>
        <taxon>Pasteurellaceae</taxon>
        <taxon>Haemophilus</taxon>
    </lineage>
</organism>